<sequence length="438" mass="48445">MHLAVVGLSHRTAPVAVREKLSIPEQQVEAAIQQLKSYPHIEEVAILSTCNRLEIYCVTRATEPGVREITQFLSEHSHLPLGELRPHLFVLLHQDAVMHLMRVAAGLDSLVLGEGQILSQVKTMYKLGQQYEGVGRILNRLLKQAVTAGKRVRTETSIGTGAVSISSAAVELAQLKVIARDDRSDGNLAGQRVLILGAGKMSRLLVQHLIAKGADTIQILNRTLGRAEELAKQYGGDLQIQVGLLSGLMNAIVEADIVFTSTSATDPILDRAKLEMVLAPEQRLMLIDIAVPRNVAADVVELTSVESYNVDDLREVVAQNQESRRKLAEEAEALLEEEVDAFDNWWQSLDTVPTINCLRDKIEMIREQELEKALSRLGTEFGDKHQAVVEALTRGIVNKILHDPMVQLRSQQDIEARRRAVDALQMLFNLDPQGQLSS</sequence>
<comment type="function">
    <text evidence="1">Catalyzes the NADPH-dependent reduction of glutamyl-tRNA(Glu) to glutamate 1-semialdehyde (GSA).</text>
</comment>
<comment type="catalytic activity">
    <reaction evidence="1">
        <text>(S)-4-amino-5-oxopentanoate + tRNA(Glu) + NADP(+) = L-glutamyl-tRNA(Glu) + NADPH + H(+)</text>
        <dbReference type="Rhea" id="RHEA:12344"/>
        <dbReference type="Rhea" id="RHEA-COMP:9663"/>
        <dbReference type="Rhea" id="RHEA-COMP:9680"/>
        <dbReference type="ChEBI" id="CHEBI:15378"/>
        <dbReference type="ChEBI" id="CHEBI:57501"/>
        <dbReference type="ChEBI" id="CHEBI:57783"/>
        <dbReference type="ChEBI" id="CHEBI:58349"/>
        <dbReference type="ChEBI" id="CHEBI:78442"/>
        <dbReference type="ChEBI" id="CHEBI:78520"/>
        <dbReference type="EC" id="1.2.1.70"/>
    </reaction>
</comment>
<comment type="pathway">
    <text evidence="1">Porphyrin-containing compound metabolism; protoporphyrin-IX biosynthesis; 5-aminolevulinate from L-glutamyl-tRNA(Glu): step 1/2.</text>
</comment>
<comment type="pathway">
    <text evidence="1">Porphyrin-containing compound metabolism; chlorophyll biosynthesis.</text>
</comment>
<comment type="subunit">
    <text evidence="1">Homodimer.</text>
</comment>
<comment type="domain">
    <text evidence="1">Possesses an unusual extended V-shaped dimeric structure with each monomer consisting of three distinct domains arranged along a curved 'spinal' alpha-helix. The N-terminal catalytic domain specifically recognizes the glutamate moiety of the substrate. The second domain is the NADPH-binding domain, and the third C-terminal domain is responsible for dimerization.</text>
</comment>
<comment type="miscellaneous">
    <text evidence="1">During catalysis, the active site Cys acts as a nucleophile attacking the alpha-carbonyl group of tRNA-bound glutamate with the formation of a thioester intermediate between enzyme and glutamate, and the concomitant release of tRNA(Glu). The thioester intermediate is finally reduced by direct hydride transfer from NADPH, to form the product GSA.</text>
</comment>
<comment type="similarity">
    <text evidence="1">Belongs to the glutamyl-tRNA reductase family.</text>
</comment>
<evidence type="ECO:0000255" key="1">
    <source>
        <dbReference type="HAMAP-Rule" id="MF_00087"/>
    </source>
</evidence>
<name>HEM1_SYNE7</name>
<organism>
    <name type="scientific">Synechococcus elongatus (strain ATCC 33912 / PCC 7942 / FACHB-805)</name>
    <name type="common">Anacystis nidulans R2</name>
    <dbReference type="NCBI Taxonomy" id="1140"/>
    <lineage>
        <taxon>Bacteria</taxon>
        <taxon>Bacillati</taxon>
        <taxon>Cyanobacteriota</taxon>
        <taxon>Cyanophyceae</taxon>
        <taxon>Synechococcales</taxon>
        <taxon>Synechococcaceae</taxon>
        <taxon>Synechococcus</taxon>
    </lineage>
</organism>
<proteinExistence type="inferred from homology"/>
<accession>Q31QY3</accession>
<gene>
    <name evidence="1" type="primary">hemA</name>
    <name type="ordered locus">Synpcc7942_0504</name>
</gene>
<protein>
    <recommendedName>
        <fullName evidence="1">Glutamyl-tRNA reductase</fullName>
        <shortName evidence="1">GluTR</shortName>
        <ecNumber evidence="1">1.2.1.70</ecNumber>
    </recommendedName>
</protein>
<reference key="1">
    <citation type="submission" date="2005-08" db="EMBL/GenBank/DDBJ databases">
        <title>Complete sequence of chromosome 1 of Synechococcus elongatus PCC 7942.</title>
        <authorList>
            <consortium name="US DOE Joint Genome Institute"/>
            <person name="Copeland A."/>
            <person name="Lucas S."/>
            <person name="Lapidus A."/>
            <person name="Barry K."/>
            <person name="Detter J.C."/>
            <person name="Glavina T."/>
            <person name="Hammon N."/>
            <person name="Israni S."/>
            <person name="Pitluck S."/>
            <person name="Schmutz J."/>
            <person name="Larimer F."/>
            <person name="Land M."/>
            <person name="Kyrpides N."/>
            <person name="Lykidis A."/>
            <person name="Golden S."/>
            <person name="Richardson P."/>
        </authorList>
    </citation>
    <scope>NUCLEOTIDE SEQUENCE [LARGE SCALE GENOMIC DNA]</scope>
    <source>
        <strain>ATCC 33912 / PCC 7942 / FACHB-805</strain>
    </source>
</reference>
<feature type="chain" id="PRO_1000004710" description="Glutamyl-tRNA reductase">
    <location>
        <begin position="1"/>
        <end position="438"/>
    </location>
</feature>
<feature type="active site" description="Nucleophile" evidence="1">
    <location>
        <position position="50"/>
    </location>
</feature>
<feature type="binding site" evidence="1">
    <location>
        <begin position="49"/>
        <end position="52"/>
    </location>
    <ligand>
        <name>substrate</name>
    </ligand>
</feature>
<feature type="binding site" evidence="1">
    <location>
        <position position="109"/>
    </location>
    <ligand>
        <name>substrate</name>
    </ligand>
</feature>
<feature type="binding site" evidence="1">
    <location>
        <begin position="114"/>
        <end position="116"/>
    </location>
    <ligand>
        <name>substrate</name>
    </ligand>
</feature>
<feature type="binding site" evidence="1">
    <location>
        <position position="120"/>
    </location>
    <ligand>
        <name>substrate</name>
    </ligand>
</feature>
<feature type="binding site" evidence="1">
    <location>
        <begin position="197"/>
        <end position="202"/>
    </location>
    <ligand>
        <name>NADP(+)</name>
        <dbReference type="ChEBI" id="CHEBI:58349"/>
    </ligand>
</feature>
<feature type="site" description="Important for activity" evidence="1">
    <location>
        <position position="99"/>
    </location>
</feature>
<keyword id="KW-0149">Chlorophyll biosynthesis</keyword>
<keyword id="KW-0521">NADP</keyword>
<keyword id="KW-0560">Oxidoreductase</keyword>
<keyword id="KW-0627">Porphyrin biosynthesis</keyword>
<keyword id="KW-1185">Reference proteome</keyword>
<dbReference type="EC" id="1.2.1.70" evidence="1"/>
<dbReference type="EMBL" id="CP000100">
    <property type="protein sequence ID" value="ABB56536.1"/>
    <property type="molecule type" value="Genomic_DNA"/>
</dbReference>
<dbReference type="RefSeq" id="WP_011243328.1">
    <property type="nucleotide sequence ID" value="NZ_JACJTX010000002.1"/>
</dbReference>
<dbReference type="SMR" id="Q31QY3"/>
<dbReference type="STRING" id="1140.Synpcc7942_0504"/>
<dbReference type="PaxDb" id="1140-Synpcc7942_0504"/>
<dbReference type="KEGG" id="syf:Synpcc7942_0504"/>
<dbReference type="eggNOG" id="COG0373">
    <property type="taxonomic scope" value="Bacteria"/>
</dbReference>
<dbReference type="HOGENOM" id="CLU_035113_2_1_3"/>
<dbReference type="OrthoDB" id="110209at2"/>
<dbReference type="BioCyc" id="SYNEL:SYNPCC7942_0504-MONOMER"/>
<dbReference type="UniPathway" id="UPA00251">
    <property type="reaction ID" value="UER00316"/>
</dbReference>
<dbReference type="UniPathway" id="UPA00668"/>
<dbReference type="Proteomes" id="UP000889800">
    <property type="component" value="Chromosome"/>
</dbReference>
<dbReference type="GO" id="GO:0008883">
    <property type="term" value="F:glutamyl-tRNA reductase activity"/>
    <property type="evidence" value="ECO:0007669"/>
    <property type="project" value="UniProtKB-UniRule"/>
</dbReference>
<dbReference type="GO" id="GO:0050661">
    <property type="term" value="F:NADP binding"/>
    <property type="evidence" value="ECO:0007669"/>
    <property type="project" value="InterPro"/>
</dbReference>
<dbReference type="GO" id="GO:0015995">
    <property type="term" value="P:chlorophyll biosynthetic process"/>
    <property type="evidence" value="ECO:0007669"/>
    <property type="project" value="UniProtKB-UniRule"/>
</dbReference>
<dbReference type="GO" id="GO:0006782">
    <property type="term" value="P:protoporphyrinogen IX biosynthetic process"/>
    <property type="evidence" value="ECO:0007669"/>
    <property type="project" value="UniProtKB-UniRule"/>
</dbReference>
<dbReference type="CDD" id="cd05213">
    <property type="entry name" value="NAD_bind_Glutamyl_tRNA_reduct"/>
    <property type="match status" value="1"/>
</dbReference>
<dbReference type="FunFam" id="3.30.460.30:FF:000001">
    <property type="entry name" value="Glutamyl-tRNA reductase"/>
    <property type="match status" value="1"/>
</dbReference>
<dbReference type="FunFam" id="3.40.50.720:FF:000031">
    <property type="entry name" value="Glutamyl-tRNA reductase"/>
    <property type="match status" value="1"/>
</dbReference>
<dbReference type="Gene3D" id="3.30.460.30">
    <property type="entry name" value="Glutamyl-tRNA reductase, N-terminal domain"/>
    <property type="match status" value="1"/>
</dbReference>
<dbReference type="Gene3D" id="3.40.50.720">
    <property type="entry name" value="NAD(P)-binding Rossmann-like Domain"/>
    <property type="match status" value="1"/>
</dbReference>
<dbReference type="HAMAP" id="MF_00087">
    <property type="entry name" value="Glu_tRNA_reductase"/>
    <property type="match status" value="1"/>
</dbReference>
<dbReference type="InterPro" id="IPR000343">
    <property type="entry name" value="4pyrrol_synth_GluRdtase"/>
</dbReference>
<dbReference type="InterPro" id="IPR015896">
    <property type="entry name" value="4pyrrol_synth_GluRdtase_dimer"/>
</dbReference>
<dbReference type="InterPro" id="IPR015895">
    <property type="entry name" value="4pyrrol_synth_GluRdtase_N"/>
</dbReference>
<dbReference type="InterPro" id="IPR018214">
    <property type="entry name" value="GluRdtase_CS"/>
</dbReference>
<dbReference type="InterPro" id="IPR036453">
    <property type="entry name" value="GluRdtase_dimer_dom_sf"/>
</dbReference>
<dbReference type="InterPro" id="IPR036343">
    <property type="entry name" value="GluRdtase_N_sf"/>
</dbReference>
<dbReference type="InterPro" id="IPR036291">
    <property type="entry name" value="NAD(P)-bd_dom_sf"/>
</dbReference>
<dbReference type="InterPro" id="IPR006151">
    <property type="entry name" value="Shikm_DH/Glu-tRNA_Rdtase"/>
</dbReference>
<dbReference type="NCBIfam" id="TIGR01035">
    <property type="entry name" value="hemA"/>
    <property type="match status" value="1"/>
</dbReference>
<dbReference type="NCBIfam" id="NF000744">
    <property type="entry name" value="PRK00045.1-3"/>
    <property type="match status" value="1"/>
</dbReference>
<dbReference type="PANTHER" id="PTHR43120">
    <property type="entry name" value="GLUTAMYL-TRNA REDUCTASE 1, CHLOROPLASTIC"/>
    <property type="match status" value="1"/>
</dbReference>
<dbReference type="PANTHER" id="PTHR43120:SF1">
    <property type="entry name" value="GLUTAMYL-TRNA REDUCTASE 1, CHLOROPLASTIC"/>
    <property type="match status" value="1"/>
</dbReference>
<dbReference type="Pfam" id="PF00745">
    <property type="entry name" value="GlutR_dimer"/>
    <property type="match status" value="1"/>
</dbReference>
<dbReference type="Pfam" id="PF05201">
    <property type="entry name" value="GlutR_N"/>
    <property type="match status" value="1"/>
</dbReference>
<dbReference type="Pfam" id="PF01488">
    <property type="entry name" value="Shikimate_DH"/>
    <property type="match status" value="1"/>
</dbReference>
<dbReference type="PIRSF" id="PIRSF000445">
    <property type="entry name" value="4pyrrol_synth_GluRdtase"/>
    <property type="match status" value="1"/>
</dbReference>
<dbReference type="SUPFAM" id="SSF69742">
    <property type="entry name" value="Glutamyl tRNA-reductase catalytic, N-terminal domain"/>
    <property type="match status" value="1"/>
</dbReference>
<dbReference type="SUPFAM" id="SSF69075">
    <property type="entry name" value="Glutamyl tRNA-reductase dimerization domain"/>
    <property type="match status" value="1"/>
</dbReference>
<dbReference type="SUPFAM" id="SSF51735">
    <property type="entry name" value="NAD(P)-binding Rossmann-fold domains"/>
    <property type="match status" value="1"/>
</dbReference>
<dbReference type="PROSITE" id="PS00747">
    <property type="entry name" value="GLUTR"/>
    <property type="match status" value="1"/>
</dbReference>